<evidence type="ECO:0000255" key="1">
    <source>
        <dbReference type="HAMAP-Rule" id="MF_00685"/>
    </source>
</evidence>
<gene>
    <name evidence="1" type="primary">glgB</name>
    <name type="ordered locus">BB2864</name>
</gene>
<sequence>MMRDSPSIQGTLDAATQHALLAGRHADPFSVLGPHQAGAHTVVRVLAPGARTVMAVLPGGQRTPLLPMQPGLFENTVPGLQPGAPAAYRLCIEWEGGIQHTADPYAFGPVLDAAQLDHCAAGGWRYLAGLLGAHAASVDGCAGTRFALWAPNARRVAVVGDFNGWDGRRHAMRLRYPAGVWELFLPDVGPGARYKFQVLGADGHTVLKADPLARQAEAPPATASIVPDERPFAWTDEAWMEQRAARQRCDAPISIYEVHAGSWFDDAGAPRWQSLAARLPEYARSLGFTHIELLPVMAHPFGGSWGYQPLGLFAPAAAHGAPADFAHFVDRCHEAGLGVILDWVPAHFPDDAHGLARLDGTPLYEHADPREGRHPDWNTLIYNYGRREVRAFLIASAIHWLRHYHVDGLRVDAVASMLYRDYSRPAGQWIPNRHGGRENLEAIDFLRELNAAVGVQCPGAITVAEESTAWPGVTAPVANGGLGFDYKWNMGWMHDTLRYMRRDPIHRRHHHHDLSFGMVYAYAERFVLPLSHDEVVHGKGSLLGKMPGERAAQLAQLRLYYAFMWAHPGKKLLFMGGEFGQQGEWNHDAMLQWSLLDDPAHRGLQRLIADLNHVYATLPELHCRDADPSGFAWIVGDDADNSVLAFARVDASHCLVAVCNFTPVPRPGYRFGVPHAGDWRVRVDTGATRYGGAGGGPPICLRSEPIPAHGHPQSLVLDLPGFTALYLRHSE</sequence>
<dbReference type="EC" id="2.4.1.18" evidence="1"/>
<dbReference type="EMBL" id="BX640445">
    <property type="protein sequence ID" value="CAE33356.1"/>
    <property type="molecule type" value="Genomic_DNA"/>
</dbReference>
<dbReference type="RefSeq" id="WP_010926666.1">
    <property type="nucleotide sequence ID" value="NC_002927.3"/>
</dbReference>
<dbReference type="SMR" id="Q7WII7"/>
<dbReference type="CAZy" id="CBM48">
    <property type="family name" value="Carbohydrate-Binding Module Family 48"/>
</dbReference>
<dbReference type="CAZy" id="GH13">
    <property type="family name" value="Glycoside Hydrolase Family 13"/>
</dbReference>
<dbReference type="KEGG" id="bbr:BB2864"/>
<dbReference type="eggNOG" id="COG0296">
    <property type="taxonomic scope" value="Bacteria"/>
</dbReference>
<dbReference type="HOGENOM" id="CLU_004245_3_2_4"/>
<dbReference type="UniPathway" id="UPA00164"/>
<dbReference type="Proteomes" id="UP000001027">
    <property type="component" value="Chromosome"/>
</dbReference>
<dbReference type="GO" id="GO:0005829">
    <property type="term" value="C:cytosol"/>
    <property type="evidence" value="ECO:0007669"/>
    <property type="project" value="TreeGrafter"/>
</dbReference>
<dbReference type="GO" id="GO:0003844">
    <property type="term" value="F:1,4-alpha-glucan branching enzyme activity"/>
    <property type="evidence" value="ECO:0007669"/>
    <property type="project" value="UniProtKB-UniRule"/>
</dbReference>
<dbReference type="GO" id="GO:0043169">
    <property type="term" value="F:cation binding"/>
    <property type="evidence" value="ECO:0007669"/>
    <property type="project" value="InterPro"/>
</dbReference>
<dbReference type="GO" id="GO:0004553">
    <property type="term" value="F:hydrolase activity, hydrolyzing O-glycosyl compounds"/>
    <property type="evidence" value="ECO:0007669"/>
    <property type="project" value="InterPro"/>
</dbReference>
<dbReference type="GO" id="GO:0005978">
    <property type="term" value="P:glycogen biosynthetic process"/>
    <property type="evidence" value="ECO:0007669"/>
    <property type="project" value="UniProtKB-UniRule"/>
</dbReference>
<dbReference type="CDD" id="cd11322">
    <property type="entry name" value="AmyAc_Glg_BE"/>
    <property type="match status" value="1"/>
</dbReference>
<dbReference type="CDD" id="cd02855">
    <property type="entry name" value="E_set_GBE_prok_N"/>
    <property type="match status" value="1"/>
</dbReference>
<dbReference type="FunFam" id="2.60.40.10:FF:000169">
    <property type="entry name" value="1,4-alpha-glucan branching enzyme GlgB"/>
    <property type="match status" value="1"/>
</dbReference>
<dbReference type="FunFam" id="2.60.40.1180:FF:000002">
    <property type="entry name" value="1,4-alpha-glucan branching enzyme GlgB"/>
    <property type="match status" value="1"/>
</dbReference>
<dbReference type="FunFam" id="3.20.20.80:FF:000003">
    <property type="entry name" value="1,4-alpha-glucan branching enzyme GlgB"/>
    <property type="match status" value="1"/>
</dbReference>
<dbReference type="Gene3D" id="3.20.20.80">
    <property type="entry name" value="Glycosidases"/>
    <property type="match status" value="1"/>
</dbReference>
<dbReference type="Gene3D" id="2.60.40.1180">
    <property type="entry name" value="Golgi alpha-mannosidase II"/>
    <property type="match status" value="1"/>
</dbReference>
<dbReference type="Gene3D" id="2.60.40.10">
    <property type="entry name" value="Immunoglobulins"/>
    <property type="match status" value="2"/>
</dbReference>
<dbReference type="HAMAP" id="MF_00685">
    <property type="entry name" value="GlgB"/>
    <property type="match status" value="1"/>
</dbReference>
<dbReference type="InterPro" id="IPR006048">
    <property type="entry name" value="A-amylase/branching_C"/>
</dbReference>
<dbReference type="InterPro" id="IPR037439">
    <property type="entry name" value="Branching_enzy"/>
</dbReference>
<dbReference type="InterPro" id="IPR006407">
    <property type="entry name" value="GlgB"/>
</dbReference>
<dbReference type="InterPro" id="IPR054169">
    <property type="entry name" value="GlgB_N"/>
</dbReference>
<dbReference type="InterPro" id="IPR044143">
    <property type="entry name" value="GlgB_N_E_set_prok"/>
</dbReference>
<dbReference type="InterPro" id="IPR006047">
    <property type="entry name" value="Glyco_hydro_13_cat_dom"/>
</dbReference>
<dbReference type="InterPro" id="IPR004193">
    <property type="entry name" value="Glyco_hydro_13_N"/>
</dbReference>
<dbReference type="InterPro" id="IPR013780">
    <property type="entry name" value="Glyco_hydro_b"/>
</dbReference>
<dbReference type="InterPro" id="IPR017853">
    <property type="entry name" value="Glycoside_hydrolase_SF"/>
</dbReference>
<dbReference type="InterPro" id="IPR013783">
    <property type="entry name" value="Ig-like_fold"/>
</dbReference>
<dbReference type="InterPro" id="IPR014756">
    <property type="entry name" value="Ig_E-set"/>
</dbReference>
<dbReference type="NCBIfam" id="TIGR01515">
    <property type="entry name" value="branching_enzym"/>
    <property type="match status" value="1"/>
</dbReference>
<dbReference type="NCBIfam" id="NF003811">
    <property type="entry name" value="PRK05402.1"/>
    <property type="match status" value="1"/>
</dbReference>
<dbReference type="NCBIfam" id="NF008967">
    <property type="entry name" value="PRK12313.1"/>
    <property type="match status" value="1"/>
</dbReference>
<dbReference type="PANTHER" id="PTHR43651">
    <property type="entry name" value="1,4-ALPHA-GLUCAN-BRANCHING ENZYME"/>
    <property type="match status" value="1"/>
</dbReference>
<dbReference type="PANTHER" id="PTHR43651:SF3">
    <property type="entry name" value="1,4-ALPHA-GLUCAN-BRANCHING ENZYME"/>
    <property type="match status" value="1"/>
</dbReference>
<dbReference type="Pfam" id="PF00128">
    <property type="entry name" value="Alpha-amylase"/>
    <property type="match status" value="1"/>
</dbReference>
<dbReference type="Pfam" id="PF02806">
    <property type="entry name" value="Alpha-amylase_C"/>
    <property type="match status" value="1"/>
</dbReference>
<dbReference type="Pfam" id="PF02922">
    <property type="entry name" value="CBM_48"/>
    <property type="match status" value="1"/>
</dbReference>
<dbReference type="Pfam" id="PF22019">
    <property type="entry name" value="GlgB_N"/>
    <property type="match status" value="1"/>
</dbReference>
<dbReference type="PIRSF" id="PIRSF000463">
    <property type="entry name" value="GlgB"/>
    <property type="match status" value="1"/>
</dbReference>
<dbReference type="SMART" id="SM00642">
    <property type="entry name" value="Aamy"/>
    <property type="match status" value="1"/>
</dbReference>
<dbReference type="SUPFAM" id="SSF51445">
    <property type="entry name" value="(Trans)glycosidases"/>
    <property type="match status" value="1"/>
</dbReference>
<dbReference type="SUPFAM" id="SSF81296">
    <property type="entry name" value="E set domains"/>
    <property type="match status" value="1"/>
</dbReference>
<dbReference type="SUPFAM" id="SSF51011">
    <property type="entry name" value="Glycosyl hydrolase domain"/>
    <property type="match status" value="1"/>
</dbReference>
<protein>
    <recommendedName>
        <fullName evidence="1">1,4-alpha-glucan branching enzyme GlgB</fullName>
        <ecNumber evidence="1">2.4.1.18</ecNumber>
    </recommendedName>
    <alternativeName>
        <fullName evidence="1">1,4-alpha-D-glucan:1,4-alpha-D-glucan 6-glucosyl-transferase</fullName>
    </alternativeName>
    <alternativeName>
        <fullName evidence="1">Alpha-(1-&gt;4)-glucan branching enzyme</fullName>
    </alternativeName>
    <alternativeName>
        <fullName evidence="1">Glycogen branching enzyme</fullName>
        <shortName evidence="1">BE</shortName>
    </alternativeName>
</protein>
<name>GLGB_BORBR</name>
<proteinExistence type="inferred from homology"/>
<feature type="chain" id="PRO_0000188685" description="1,4-alpha-glucan branching enzyme GlgB">
    <location>
        <begin position="1"/>
        <end position="731"/>
    </location>
</feature>
<feature type="active site" description="Nucleophile" evidence="1">
    <location>
        <position position="412"/>
    </location>
</feature>
<feature type="active site" description="Proton donor" evidence="1">
    <location>
        <position position="465"/>
    </location>
</feature>
<comment type="function">
    <text evidence="1">Catalyzes the formation of the alpha-1,6-glucosidic linkages in glycogen by scission of a 1,4-alpha-linked oligosaccharide from growing alpha-1,4-glucan chains and the subsequent attachment of the oligosaccharide to the alpha-1,6 position.</text>
</comment>
<comment type="catalytic activity">
    <reaction evidence="1">
        <text>Transfers a segment of a (1-&gt;4)-alpha-D-glucan chain to a primary hydroxy group in a similar glucan chain.</text>
        <dbReference type="EC" id="2.4.1.18"/>
    </reaction>
</comment>
<comment type="pathway">
    <text evidence="1">Glycan biosynthesis; glycogen biosynthesis.</text>
</comment>
<comment type="subunit">
    <text evidence="1">Monomer.</text>
</comment>
<comment type="similarity">
    <text evidence="1">Belongs to the glycosyl hydrolase 13 family. GlgB subfamily.</text>
</comment>
<organism>
    <name type="scientific">Bordetella bronchiseptica (strain ATCC BAA-588 / NCTC 13252 / RB50)</name>
    <name type="common">Alcaligenes bronchisepticus</name>
    <dbReference type="NCBI Taxonomy" id="257310"/>
    <lineage>
        <taxon>Bacteria</taxon>
        <taxon>Pseudomonadati</taxon>
        <taxon>Pseudomonadota</taxon>
        <taxon>Betaproteobacteria</taxon>
        <taxon>Burkholderiales</taxon>
        <taxon>Alcaligenaceae</taxon>
        <taxon>Bordetella</taxon>
    </lineage>
</organism>
<reference key="1">
    <citation type="journal article" date="2003" name="Nat. Genet.">
        <title>Comparative analysis of the genome sequences of Bordetella pertussis, Bordetella parapertussis and Bordetella bronchiseptica.</title>
        <authorList>
            <person name="Parkhill J."/>
            <person name="Sebaihia M."/>
            <person name="Preston A."/>
            <person name="Murphy L.D."/>
            <person name="Thomson N.R."/>
            <person name="Harris D.E."/>
            <person name="Holden M.T.G."/>
            <person name="Churcher C.M."/>
            <person name="Bentley S.D."/>
            <person name="Mungall K.L."/>
            <person name="Cerdeno-Tarraga A.-M."/>
            <person name="Temple L."/>
            <person name="James K.D."/>
            <person name="Harris B."/>
            <person name="Quail M.A."/>
            <person name="Achtman M."/>
            <person name="Atkin R."/>
            <person name="Baker S."/>
            <person name="Basham D."/>
            <person name="Bason N."/>
            <person name="Cherevach I."/>
            <person name="Chillingworth T."/>
            <person name="Collins M."/>
            <person name="Cronin A."/>
            <person name="Davis P."/>
            <person name="Doggett J."/>
            <person name="Feltwell T."/>
            <person name="Goble A."/>
            <person name="Hamlin N."/>
            <person name="Hauser H."/>
            <person name="Holroyd S."/>
            <person name="Jagels K."/>
            <person name="Leather S."/>
            <person name="Moule S."/>
            <person name="Norberczak H."/>
            <person name="O'Neil S."/>
            <person name="Ormond D."/>
            <person name="Price C."/>
            <person name="Rabbinowitsch E."/>
            <person name="Rutter S."/>
            <person name="Sanders M."/>
            <person name="Saunders D."/>
            <person name="Seeger K."/>
            <person name="Sharp S."/>
            <person name="Simmonds M."/>
            <person name="Skelton J."/>
            <person name="Squares R."/>
            <person name="Squares S."/>
            <person name="Stevens K."/>
            <person name="Unwin L."/>
            <person name="Whitehead S."/>
            <person name="Barrell B.G."/>
            <person name="Maskell D.J."/>
        </authorList>
    </citation>
    <scope>NUCLEOTIDE SEQUENCE [LARGE SCALE GENOMIC DNA]</scope>
    <source>
        <strain>ATCC BAA-588 / NCTC 13252 / RB50</strain>
    </source>
</reference>
<keyword id="KW-0119">Carbohydrate metabolism</keyword>
<keyword id="KW-0320">Glycogen biosynthesis</keyword>
<keyword id="KW-0321">Glycogen metabolism</keyword>
<keyword id="KW-0328">Glycosyltransferase</keyword>
<keyword id="KW-0808">Transferase</keyword>
<accession>Q7WII7</accession>